<dbReference type="EC" id="2.7.13.3"/>
<dbReference type="EMBL" id="D10690">
    <property type="protein sequence ID" value="BAA01532.1"/>
    <property type="molecule type" value="Genomic_DNA"/>
</dbReference>
<dbReference type="PIR" id="I39833">
    <property type="entry name" value="I39833"/>
</dbReference>
<dbReference type="SMR" id="Q03069"/>
<dbReference type="GO" id="GO:0005886">
    <property type="term" value="C:plasma membrane"/>
    <property type="evidence" value="ECO:0007669"/>
    <property type="project" value="UniProtKB-SubCell"/>
</dbReference>
<dbReference type="GO" id="GO:0005524">
    <property type="term" value="F:ATP binding"/>
    <property type="evidence" value="ECO:0007669"/>
    <property type="project" value="UniProtKB-KW"/>
</dbReference>
<dbReference type="GO" id="GO:0000155">
    <property type="term" value="F:phosphorelay sensor kinase activity"/>
    <property type="evidence" value="ECO:0007669"/>
    <property type="project" value="InterPro"/>
</dbReference>
<dbReference type="CDD" id="cd00082">
    <property type="entry name" value="HisKA"/>
    <property type="match status" value="1"/>
</dbReference>
<dbReference type="Gene3D" id="1.10.287.130">
    <property type="match status" value="1"/>
</dbReference>
<dbReference type="Gene3D" id="3.30.565.10">
    <property type="entry name" value="Histidine kinase-like ATPase, C-terminal domain"/>
    <property type="match status" value="1"/>
</dbReference>
<dbReference type="InterPro" id="IPR036890">
    <property type="entry name" value="HATPase_C_sf"/>
</dbReference>
<dbReference type="InterPro" id="IPR005467">
    <property type="entry name" value="His_kinase_dom"/>
</dbReference>
<dbReference type="InterPro" id="IPR003661">
    <property type="entry name" value="HisK_dim/P_dom"/>
</dbReference>
<dbReference type="InterPro" id="IPR036097">
    <property type="entry name" value="HisK_dim/P_sf"/>
</dbReference>
<dbReference type="InterPro" id="IPR004358">
    <property type="entry name" value="Sig_transdc_His_kin-like_C"/>
</dbReference>
<dbReference type="PANTHER" id="PTHR43065:SF46">
    <property type="entry name" value="C4-DICARBOXYLATE TRANSPORT SENSOR PROTEIN DCTB"/>
    <property type="match status" value="1"/>
</dbReference>
<dbReference type="PANTHER" id="PTHR43065">
    <property type="entry name" value="SENSOR HISTIDINE KINASE"/>
    <property type="match status" value="1"/>
</dbReference>
<dbReference type="Pfam" id="PF02518">
    <property type="entry name" value="HATPase_c"/>
    <property type="match status" value="1"/>
</dbReference>
<dbReference type="Pfam" id="PF00512">
    <property type="entry name" value="HisKA"/>
    <property type="match status" value="1"/>
</dbReference>
<dbReference type="PRINTS" id="PR00344">
    <property type="entry name" value="BCTRLSENSOR"/>
</dbReference>
<dbReference type="SMART" id="SM00387">
    <property type="entry name" value="HATPase_c"/>
    <property type="match status" value="1"/>
</dbReference>
<dbReference type="SMART" id="SM00388">
    <property type="entry name" value="HisKA"/>
    <property type="match status" value="1"/>
</dbReference>
<dbReference type="SUPFAM" id="SSF55874">
    <property type="entry name" value="ATPase domain of HSP90 chaperone/DNA topoisomerase II/histidine kinase"/>
    <property type="match status" value="1"/>
</dbReference>
<dbReference type="SUPFAM" id="SSF47384">
    <property type="entry name" value="Homodimeric domain of signal transducing histidine kinase"/>
    <property type="match status" value="1"/>
</dbReference>
<dbReference type="PROSITE" id="PS50109">
    <property type="entry name" value="HIS_KIN"/>
    <property type="match status" value="1"/>
</dbReference>
<gene>
    <name type="primary">degM</name>
</gene>
<name>DEGM_BACB2</name>
<organism>
    <name type="scientific">Bacillus sp. (strain B21-2)</name>
    <dbReference type="NCBI Taxonomy" id="69001"/>
    <lineage>
        <taxon>Bacteria</taxon>
        <taxon>Bacillati</taxon>
        <taxon>Bacillota</taxon>
        <taxon>Bacilli</taxon>
        <taxon>Bacillales</taxon>
        <taxon>Bacillaceae</taxon>
        <taxon>Bacillus</taxon>
    </lineage>
</organism>
<accession>Q03069</accession>
<reference key="1">
    <citation type="journal article" date="1992" name="J. Ferment. Bioeng.">
        <title>Cloning and nucleotide sequence of degM, the regulatory gene, degM, for minor protease in Bacillus subtilis.</title>
        <authorList>
            <person name="Masui A."/>
            <person name="Fujiwara N."/>
            <person name="Takagi M."/>
            <person name="Imanaka T."/>
        </authorList>
    </citation>
    <scope>NUCLEOTIDE SEQUENCE [GENOMIC DNA]</scope>
</reference>
<protein>
    <recommendedName>
        <fullName>Sensor protein DegM</fullName>
        <ecNumber>2.7.13.3</ecNumber>
    </recommendedName>
</protein>
<sequence>MSGAVLLCLFFSINVGNIQWDLRYIPILLAFLYGGKRAGWGVAAIAVVGRIGQGGDLFLLGVVLIVLTALFYALCVNRFYMLPPRWSRIRYASLLVILPATIQTFGTLYLINYENHLSESWVAGWLYIVFLVVTVVLVTYLFETLLEKERIVAELVATEKDFTKGELAASIAHEVRNPLTVVKGFVQLLSEDKQHAEYHKLILSELDRAESIIYEFLNTTRPQTNATFHLNETAREVVALLTPYAQERSIQLTIGTCEQAIVNGNENKVKQALMNFVKNGIEASNEGDTVTIQLDRLKDRAQIEINDNGVGMSRQQLKQLGTAYFTTKESGNGIGTMVSIRIVEMMNGMVTFKSKPGKGTKVVLSLPIEKENE</sequence>
<proteinExistence type="inferred from homology"/>
<keyword id="KW-0067">ATP-binding</keyword>
<keyword id="KW-1003">Cell membrane</keyword>
<keyword id="KW-0418">Kinase</keyword>
<keyword id="KW-0472">Membrane</keyword>
<keyword id="KW-0547">Nucleotide-binding</keyword>
<keyword id="KW-0597">Phosphoprotein</keyword>
<keyword id="KW-0808">Transferase</keyword>
<keyword id="KW-0812">Transmembrane</keyword>
<keyword id="KW-1133">Transmembrane helix</keyword>
<keyword id="KW-0902">Two-component regulatory system</keyword>
<feature type="chain" id="PRO_0000074754" description="Sensor protein DegM">
    <location>
        <begin position="1"/>
        <end position="373"/>
    </location>
</feature>
<feature type="transmembrane region" description="Helical" evidence="1">
    <location>
        <begin position="27"/>
        <end position="47"/>
    </location>
</feature>
<feature type="transmembrane region" description="Helical" evidence="1">
    <location>
        <begin position="57"/>
        <end position="77"/>
    </location>
</feature>
<feature type="transmembrane region" description="Helical" evidence="1">
    <location>
        <begin position="91"/>
        <end position="111"/>
    </location>
</feature>
<feature type="transmembrane region" description="Helical" evidence="1">
    <location>
        <begin position="122"/>
        <end position="142"/>
    </location>
</feature>
<feature type="domain" description="Histidine kinase" evidence="2">
    <location>
        <begin position="170"/>
        <end position="370"/>
    </location>
</feature>
<feature type="modified residue" description="Phosphohistidine; by autocatalysis" evidence="2">
    <location>
        <position position="173"/>
    </location>
</feature>
<evidence type="ECO:0000255" key="1"/>
<evidence type="ECO:0000255" key="2">
    <source>
        <dbReference type="PROSITE-ProRule" id="PRU00107"/>
    </source>
</evidence>
<comment type="function">
    <text>Involved in a sensory transduction pathway that enhances the production of minor proteases.</text>
</comment>
<comment type="catalytic activity">
    <reaction>
        <text>ATP + protein L-histidine = ADP + protein N-phospho-L-histidine.</text>
        <dbReference type="EC" id="2.7.13.3"/>
    </reaction>
</comment>
<comment type="subcellular location">
    <subcellularLocation>
        <location>Cell membrane</location>
        <topology>Multi-pass membrane protein</topology>
    </subcellularLocation>
</comment>